<sequence>MQMITLAQQAKIASVELAQFENVQKNQALLTIAQQLEQRSAEILAANAKDIEFAKNQGISTAIIDRLLLNESRLQGIANDVRNVAKLADPVGQVIDGGVLNSGLKIERQRVPLGVILTIYEARPNVTIDVASLCLKTGNAVILRGGKETKFTNAVLVEVVQQALETAGLPKLAVQAVTDPDRVLLLELLKLDRYIDMVIPRGGAGLHQFCKENSTIPVIVGGIGVCHMFVEKSADQQKTLELIANAKTQRPSTCNTLETLLVEKAIAVEFLPKLANRMKALGVTLHTDDLQKTEGIEPLDEARMRQEWLSLDLNVVVIDNLTKAVEHIREYGSQHSEAILTSDYQLARQFVAQVDAAAVYINASTRFTDGGEFGLGAEVAVSTQKLHARGPMGLEALTTYKWVCEGDYLVRK</sequence>
<comment type="function">
    <text evidence="1">Catalyzes the NADPH-dependent reduction of L-glutamate 5-phosphate into L-glutamate 5-semialdehyde and phosphate. The product spontaneously undergoes cyclization to form 1-pyrroline-5-carboxylate.</text>
</comment>
<comment type="catalytic activity">
    <reaction evidence="1">
        <text>L-glutamate 5-semialdehyde + phosphate + NADP(+) = L-glutamyl 5-phosphate + NADPH + H(+)</text>
        <dbReference type="Rhea" id="RHEA:19541"/>
        <dbReference type="ChEBI" id="CHEBI:15378"/>
        <dbReference type="ChEBI" id="CHEBI:43474"/>
        <dbReference type="ChEBI" id="CHEBI:57783"/>
        <dbReference type="ChEBI" id="CHEBI:58066"/>
        <dbReference type="ChEBI" id="CHEBI:58274"/>
        <dbReference type="ChEBI" id="CHEBI:58349"/>
        <dbReference type="EC" id="1.2.1.41"/>
    </reaction>
</comment>
<comment type="pathway">
    <text evidence="1">Amino-acid biosynthesis; L-proline biosynthesis; L-glutamate 5-semialdehyde from L-glutamate: step 2/2.</text>
</comment>
<comment type="subcellular location">
    <subcellularLocation>
        <location evidence="1">Cytoplasm</location>
    </subcellularLocation>
</comment>
<comment type="similarity">
    <text evidence="1">Belongs to the gamma-glutamyl phosphate reductase family.</text>
</comment>
<name>PROA_ACTPJ</name>
<protein>
    <recommendedName>
        <fullName evidence="1">Gamma-glutamyl phosphate reductase</fullName>
        <shortName evidence="1">GPR</shortName>
        <ecNumber evidence="1">1.2.1.41</ecNumber>
    </recommendedName>
    <alternativeName>
        <fullName evidence="1">Glutamate-5-semialdehyde dehydrogenase</fullName>
    </alternativeName>
    <alternativeName>
        <fullName evidence="1">Glutamyl-gamma-semialdehyde dehydrogenase</fullName>
        <shortName evidence="1">GSA dehydrogenase</shortName>
    </alternativeName>
</protein>
<feature type="chain" id="PRO_1000123772" description="Gamma-glutamyl phosphate reductase">
    <location>
        <begin position="1"/>
        <end position="412"/>
    </location>
</feature>
<proteinExistence type="inferred from homology"/>
<organism>
    <name type="scientific">Actinobacillus pleuropneumoniae serotype 3 (strain JL03)</name>
    <dbReference type="NCBI Taxonomy" id="434271"/>
    <lineage>
        <taxon>Bacteria</taxon>
        <taxon>Pseudomonadati</taxon>
        <taxon>Pseudomonadota</taxon>
        <taxon>Gammaproteobacteria</taxon>
        <taxon>Pasteurellales</taxon>
        <taxon>Pasteurellaceae</taxon>
        <taxon>Actinobacillus</taxon>
    </lineage>
</organism>
<gene>
    <name evidence="1" type="primary">proA</name>
    <name type="ordered locus">APJL_1998</name>
</gene>
<accession>B0BTX9</accession>
<reference key="1">
    <citation type="journal article" date="2008" name="PLoS ONE">
        <title>Genome biology of Actinobacillus pleuropneumoniae JL03, an isolate of serotype 3 prevalent in China.</title>
        <authorList>
            <person name="Xu Z."/>
            <person name="Zhou Y."/>
            <person name="Li L."/>
            <person name="Zhou R."/>
            <person name="Xiao S."/>
            <person name="Wan Y."/>
            <person name="Zhang S."/>
            <person name="Wang K."/>
            <person name="Li W."/>
            <person name="Li L."/>
            <person name="Jin H."/>
            <person name="Kang M."/>
            <person name="Dalai B."/>
            <person name="Li T."/>
            <person name="Liu L."/>
            <person name="Cheng Y."/>
            <person name="Zhang L."/>
            <person name="Xu T."/>
            <person name="Zheng H."/>
            <person name="Pu S."/>
            <person name="Wang B."/>
            <person name="Gu W."/>
            <person name="Zhang X.L."/>
            <person name="Zhu G.-F."/>
            <person name="Wang S."/>
            <person name="Zhao G.-P."/>
            <person name="Chen H."/>
        </authorList>
    </citation>
    <scope>NUCLEOTIDE SEQUENCE [LARGE SCALE GENOMIC DNA]</scope>
    <source>
        <strain>JL03</strain>
    </source>
</reference>
<evidence type="ECO:0000255" key="1">
    <source>
        <dbReference type="HAMAP-Rule" id="MF_00412"/>
    </source>
</evidence>
<keyword id="KW-0028">Amino-acid biosynthesis</keyword>
<keyword id="KW-0963">Cytoplasm</keyword>
<keyword id="KW-0521">NADP</keyword>
<keyword id="KW-0560">Oxidoreductase</keyword>
<keyword id="KW-0641">Proline biosynthesis</keyword>
<dbReference type="EC" id="1.2.1.41" evidence="1"/>
<dbReference type="EMBL" id="CP000687">
    <property type="protein sequence ID" value="ABY70546.1"/>
    <property type="molecule type" value="Genomic_DNA"/>
</dbReference>
<dbReference type="RefSeq" id="WP_012263462.1">
    <property type="nucleotide sequence ID" value="NC_010278.1"/>
</dbReference>
<dbReference type="SMR" id="B0BTX9"/>
<dbReference type="KEGG" id="apj:APJL_1998"/>
<dbReference type="HOGENOM" id="CLU_030231_0_0_6"/>
<dbReference type="UniPathway" id="UPA00098">
    <property type="reaction ID" value="UER00360"/>
</dbReference>
<dbReference type="Proteomes" id="UP000008547">
    <property type="component" value="Chromosome"/>
</dbReference>
<dbReference type="GO" id="GO:0005737">
    <property type="term" value="C:cytoplasm"/>
    <property type="evidence" value="ECO:0007669"/>
    <property type="project" value="UniProtKB-SubCell"/>
</dbReference>
<dbReference type="GO" id="GO:0004350">
    <property type="term" value="F:glutamate-5-semialdehyde dehydrogenase activity"/>
    <property type="evidence" value="ECO:0007669"/>
    <property type="project" value="UniProtKB-UniRule"/>
</dbReference>
<dbReference type="GO" id="GO:0050661">
    <property type="term" value="F:NADP binding"/>
    <property type="evidence" value="ECO:0007669"/>
    <property type="project" value="InterPro"/>
</dbReference>
<dbReference type="GO" id="GO:0055129">
    <property type="term" value="P:L-proline biosynthetic process"/>
    <property type="evidence" value="ECO:0007669"/>
    <property type="project" value="UniProtKB-UniRule"/>
</dbReference>
<dbReference type="CDD" id="cd07079">
    <property type="entry name" value="ALDH_F18-19_ProA-GPR"/>
    <property type="match status" value="1"/>
</dbReference>
<dbReference type="FunFam" id="3.40.309.10:FF:000006">
    <property type="entry name" value="Gamma-glutamyl phosphate reductase"/>
    <property type="match status" value="1"/>
</dbReference>
<dbReference type="Gene3D" id="3.40.605.10">
    <property type="entry name" value="Aldehyde Dehydrogenase, Chain A, domain 1"/>
    <property type="match status" value="1"/>
</dbReference>
<dbReference type="Gene3D" id="3.40.309.10">
    <property type="entry name" value="Aldehyde Dehydrogenase, Chain A, domain 2"/>
    <property type="match status" value="1"/>
</dbReference>
<dbReference type="HAMAP" id="MF_00412">
    <property type="entry name" value="ProA"/>
    <property type="match status" value="1"/>
</dbReference>
<dbReference type="InterPro" id="IPR016161">
    <property type="entry name" value="Ald_DH/histidinol_DH"/>
</dbReference>
<dbReference type="InterPro" id="IPR016163">
    <property type="entry name" value="Ald_DH_C"/>
</dbReference>
<dbReference type="InterPro" id="IPR016162">
    <property type="entry name" value="Ald_DH_N"/>
</dbReference>
<dbReference type="InterPro" id="IPR015590">
    <property type="entry name" value="Aldehyde_DH_dom"/>
</dbReference>
<dbReference type="InterPro" id="IPR012134">
    <property type="entry name" value="Glu-5-SA_DH"/>
</dbReference>
<dbReference type="InterPro" id="IPR000965">
    <property type="entry name" value="GPR_dom"/>
</dbReference>
<dbReference type="NCBIfam" id="NF001221">
    <property type="entry name" value="PRK00197.1"/>
    <property type="match status" value="1"/>
</dbReference>
<dbReference type="NCBIfam" id="TIGR00407">
    <property type="entry name" value="proA"/>
    <property type="match status" value="1"/>
</dbReference>
<dbReference type="PANTHER" id="PTHR11063:SF8">
    <property type="entry name" value="DELTA-1-PYRROLINE-5-CARBOXYLATE SYNTHASE"/>
    <property type="match status" value="1"/>
</dbReference>
<dbReference type="PANTHER" id="PTHR11063">
    <property type="entry name" value="GLUTAMATE SEMIALDEHYDE DEHYDROGENASE"/>
    <property type="match status" value="1"/>
</dbReference>
<dbReference type="Pfam" id="PF00171">
    <property type="entry name" value="Aldedh"/>
    <property type="match status" value="1"/>
</dbReference>
<dbReference type="PIRSF" id="PIRSF000151">
    <property type="entry name" value="GPR"/>
    <property type="match status" value="1"/>
</dbReference>
<dbReference type="SUPFAM" id="SSF53720">
    <property type="entry name" value="ALDH-like"/>
    <property type="match status" value="1"/>
</dbReference>